<organism>
    <name type="scientific">Coregonus autumnalis</name>
    <name type="common">Arctic cisco</name>
    <name type="synonym">Salmo autumnalis</name>
    <dbReference type="NCBI Taxonomy" id="27773"/>
    <lineage>
        <taxon>Eukaryota</taxon>
        <taxon>Metazoa</taxon>
        <taxon>Chordata</taxon>
        <taxon>Craniata</taxon>
        <taxon>Vertebrata</taxon>
        <taxon>Euteleostomi</taxon>
        <taxon>Actinopterygii</taxon>
        <taxon>Neopterygii</taxon>
        <taxon>Teleostei</taxon>
        <taxon>Protacanthopterygii</taxon>
        <taxon>Salmoniformes</taxon>
        <taxon>Salmonidae</taxon>
        <taxon>Coregoninae</taxon>
        <taxon>Coregonus</taxon>
    </lineage>
</organism>
<comment type="function">
    <text>Involved in gametogenesis and steroidogenesis.</text>
</comment>
<comment type="subunit">
    <text>Heterodimer of an alpha and a beta chain.</text>
</comment>
<comment type="subcellular location">
    <subcellularLocation>
        <location>Secreted</location>
    </subcellularLocation>
</comment>
<comment type="similarity">
    <text evidence="3">Belongs to the glycoprotein hormones subunit beta family.</text>
</comment>
<sequence length="137" mass="15389">MYCTHLRMLQLVVMATLWVTPVRAGTHCRYGCRLNNMTITVEREDCHGSITITTCAGLCETTDLNYQSTWLPRSQGACNFKEWSYEEVYLEGCPPGANPFFIPVAKSCDCIKCKTDNTDCDRISMATPSCVVNPLEM</sequence>
<name>GTHB1_CORAU</name>
<proteinExistence type="evidence at transcript level"/>
<dbReference type="EMBL" id="L23432">
    <property type="protein sequence ID" value="AAA68208.1"/>
    <property type="molecule type" value="mRNA"/>
</dbReference>
<dbReference type="PIR" id="S34349">
    <property type="entry name" value="S34349"/>
</dbReference>
<dbReference type="SMR" id="P48250"/>
<dbReference type="GlyCosmos" id="P48250">
    <property type="glycosylation" value="1 site, No reported glycans"/>
</dbReference>
<dbReference type="GO" id="GO:0005737">
    <property type="term" value="C:cytoplasm"/>
    <property type="evidence" value="ECO:0007669"/>
    <property type="project" value="TreeGrafter"/>
</dbReference>
<dbReference type="GO" id="GO:0005615">
    <property type="term" value="C:extracellular space"/>
    <property type="evidence" value="ECO:0007669"/>
    <property type="project" value="TreeGrafter"/>
</dbReference>
<dbReference type="GO" id="GO:0005179">
    <property type="term" value="F:hormone activity"/>
    <property type="evidence" value="ECO:0007669"/>
    <property type="project" value="UniProtKB-KW"/>
</dbReference>
<dbReference type="GO" id="GO:0007186">
    <property type="term" value="P:G protein-coupled receptor signaling pathway"/>
    <property type="evidence" value="ECO:0007669"/>
    <property type="project" value="TreeGrafter"/>
</dbReference>
<dbReference type="GO" id="GO:0030728">
    <property type="term" value="P:ovulation"/>
    <property type="evidence" value="ECO:0007669"/>
    <property type="project" value="TreeGrafter"/>
</dbReference>
<dbReference type="CDD" id="cd00069">
    <property type="entry name" value="GHB_like"/>
    <property type="match status" value="1"/>
</dbReference>
<dbReference type="FunFam" id="2.10.90.10:FF:000007">
    <property type="entry name" value="Luteinizing hormone beta subunit"/>
    <property type="match status" value="1"/>
</dbReference>
<dbReference type="Gene3D" id="2.10.90.10">
    <property type="entry name" value="Cystine-knot cytokines"/>
    <property type="match status" value="1"/>
</dbReference>
<dbReference type="InterPro" id="IPR029034">
    <property type="entry name" value="Cystine-knot_cytokine"/>
</dbReference>
<dbReference type="InterPro" id="IPR006208">
    <property type="entry name" value="Glyco_hormone_CN"/>
</dbReference>
<dbReference type="InterPro" id="IPR001545">
    <property type="entry name" value="Gonadotropin_bsu"/>
</dbReference>
<dbReference type="InterPro" id="IPR018245">
    <property type="entry name" value="Gonadotropin_bsu_CS"/>
</dbReference>
<dbReference type="PANTHER" id="PTHR11515">
    <property type="entry name" value="GLYCOPROTEIN HORMONE BETA CHAIN"/>
    <property type="match status" value="1"/>
</dbReference>
<dbReference type="PANTHER" id="PTHR11515:SF11">
    <property type="entry name" value="LUTROPIN SUBUNIT BETA"/>
    <property type="match status" value="1"/>
</dbReference>
<dbReference type="Pfam" id="PF00007">
    <property type="entry name" value="Cys_knot"/>
    <property type="match status" value="1"/>
</dbReference>
<dbReference type="SMART" id="SM00068">
    <property type="entry name" value="GHB"/>
    <property type="match status" value="1"/>
</dbReference>
<dbReference type="SUPFAM" id="SSF57501">
    <property type="entry name" value="Cystine-knot cytokines"/>
    <property type="match status" value="1"/>
</dbReference>
<dbReference type="PROSITE" id="PS00261">
    <property type="entry name" value="GLYCO_HORMONE_BETA_1"/>
    <property type="match status" value="1"/>
</dbReference>
<dbReference type="PROSITE" id="PS00689">
    <property type="entry name" value="GLYCO_HORMONE_BETA_2"/>
    <property type="match status" value="1"/>
</dbReference>
<keyword id="KW-1015">Disulfide bond</keyword>
<keyword id="KW-0325">Glycoprotein</keyword>
<keyword id="KW-0372">Hormone</keyword>
<keyword id="KW-0964">Secreted</keyword>
<keyword id="KW-0732">Signal</keyword>
<reference key="1">
    <citation type="journal article" date="1994" name="Mol. Biol. (Mosk.)">
        <title>Cloning and sequencing the cDNA for the beta-subunit of Baikal omul gonadotropin.</title>
        <authorList>
            <person name="Trofimova I.N."/>
            <person name="Belikov S.I."/>
        </authorList>
    </citation>
    <scope>NUCLEOTIDE SEQUENCE [MRNA]</scope>
    <source>
        <tissue>Pituitary</tissue>
    </source>
</reference>
<protein>
    <recommendedName>
        <fullName>Gonadotropin subunit beta-1</fullName>
    </recommendedName>
    <alternativeName>
        <fullName>GTH-I-beta</fullName>
    </alternativeName>
    <alternativeName>
        <fullName>Gonadotropin beta-I chain</fullName>
    </alternativeName>
</protein>
<accession>P48250</accession>
<gene>
    <name type="primary">cgba</name>
</gene>
<evidence type="ECO:0000250" key="1"/>
<evidence type="ECO:0000255" key="2"/>
<evidence type="ECO:0000305" key="3"/>
<feature type="signal peptide" evidence="1">
    <location>
        <begin position="1"/>
        <end position="24"/>
    </location>
</feature>
<feature type="chain" id="PRO_0000011685" description="Gonadotropin subunit beta-1">
    <location>
        <begin position="25"/>
        <end position="137"/>
    </location>
</feature>
<feature type="glycosylation site" description="N-linked (GlcNAc...) asparagine" evidence="2">
    <location>
        <position position="36"/>
    </location>
</feature>
<feature type="disulfide bond" evidence="1">
    <location>
        <begin position="32"/>
        <end position="78"/>
    </location>
</feature>
<feature type="disulfide bond" evidence="1">
    <location>
        <begin position="46"/>
        <end position="93"/>
    </location>
</feature>
<feature type="disulfide bond" evidence="1">
    <location>
        <begin position="55"/>
        <end position="108"/>
    </location>
</feature>
<feature type="disulfide bond" evidence="1">
    <location>
        <begin position="59"/>
        <end position="110"/>
    </location>
</feature>
<feature type="disulfide bond" evidence="1">
    <location>
        <begin position="113"/>
        <end position="120"/>
    </location>
</feature>